<accession>A0RBT0</accession>
<evidence type="ECO:0000255" key="1">
    <source>
        <dbReference type="HAMAP-Rule" id="MF_01319"/>
    </source>
</evidence>
<feature type="chain" id="PRO_0000308269" description="Thiol-disulfide oxidoreductase ResA">
    <location>
        <begin position="1"/>
        <end position="173"/>
    </location>
</feature>
<feature type="transmembrane region" description="Helical; Signal-anchor for type II membrane protein" evidence="1">
    <location>
        <begin position="10"/>
        <end position="29"/>
    </location>
</feature>
<feature type="domain" description="Thioredoxin" evidence="1">
    <location>
        <begin position="35"/>
        <end position="173"/>
    </location>
</feature>
<feature type="disulfide bond" description="Redox-active" evidence="1">
    <location>
        <begin position="73"/>
        <end position="76"/>
    </location>
</feature>
<dbReference type="EMBL" id="CP000485">
    <property type="protein sequence ID" value="ABK84673.1"/>
    <property type="molecule type" value="Genomic_DNA"/>
</dbReference>
<dbReference type="RefSeq" id="WP_000742206.1">
    <property type="nucleotide sequence ID" value="NC_008600.1"/>
</dbReference>
<dbReference type="SMR" id="A0RBT0"/>
<dbReference type="GeneID" id="45021470"/>
<dbReference type="KEGG" id="btl:BALH_1330"/>
<dbReference type="HOGENOM" id="CLU_042529_11_2_9"/>
<dbReference type="UniPathway" id="UPA00555"/>
<dbReference type="GO" id="GO:0005886">
    <property type="term" value="C:plasma membrane"/>
    <property type="evidence" value="ECO:0007669"/>
    <property type="project" value="UniProtKB-SubCell"/>
</dbReference>
<dbReference type="GO" id="GO:0016209">
    <property type="term" value="F:antioxidant activity"/>
    <property type="evidence" value="ECO:0007669"/>
    <property type="project" value="InterPro"/>
</dbReference>
<dbReference type="GO" id="GO:0015036">
    <property type="term" value="F:disulfide oxidoreductase activity"/>
    <property type="evidence" value="ECO:0007669"/>
    <property type="project" value="UniProtKB-UniRule"/>
</dbReference>
<dbReference type="GO" id="GO:0017004">
    <property type="term" value="P:cytochrome complex assembly"/>
    <property type="evidence" value="ECO:0007669"/>
    <property type="project" value="UniProtKB-UniRule"/>
</dbReference>
<dbReference type="CDD" id="cd02966">
    <property type="entry name" value="TlpA_like_family"/>
    <property type="match status" value="1"/>
</dbReference>
<dbReference type="FunFam" id="3.40.30.10:FF:000181">
    <property type="entry name" value="Thiol-disulfide oxidoreductase ResA"/>
    <property type="match status" value="1"/>
</dbReference>
<dbReference type="Gene3D" id="3.40.30.10">
    <property type="entry name" value="Glutaredoxin"/>
    <property type="match status" value="1"/>
</dbReference>
<dbReference type="HAMAP" id="MF_01319">
    <property type="entry name" value="ResA"/>
    <property type="match status" value="1"/>
</dbReference>
<dbReference type="InterPro" id="IPR000866">
    <property type="entry name" value="AhpC/TSA"/>
</dbReference>
<dbReference type="InterPro" id="IPR023555">
    <property type="entry name" value="Thiol-dS_OxRdtase_ResA"/>
</dbReference>
<dbReference type="InterPro" id="IPR036249">
    <property type="entry name" value="Thioredoxin-like_sf"/>
</dbReference>
<dbReference type="InterPro" id="IPR013766">
    <property type="entry name" value="Thioredoxin_domain"/>
</dbReference>
<dbReference type="InterPro" id="IPR050553">
    <property type="entry name" value="Thioredoxin_ResA/DsbE_sf"/>
</dbReference>
<dbReference type="NCBIfam" id="NF002854">
    <property type="entry name" value="PRK03147.1"/>
    <property type="match status" value="1"/>
</dbReference>
<dbReference type="PANTHER" id="PTHR42852">
    <property type="entry name" value="THIOL:DISULFIDE INTERCHANGE PROTEIN DSBE"/>
    <property type="match status" value="1"/>
</dbReference>
<dbReference type="PANTHER" id="PTHR42852:SF6">
    <property type="entry name" value="THIOL:DISULFIDE INTERCHANGE PROTEIN DSBE"/>
    <property type="match status" value="1"/>
</dbReference>
<dbReference type="Pfam" id="PF00578">
    <property type="entry name" value="AhpC-TSA"/>
    <property type="match status" value="1"/>
</dbReference>
<dbReference type="SUPFAM" id="SSF52833">
    <property type="entry name" value="Thioredoxin-like"/>
    <property type="match status" value="1"/>
</dbReference>
<dbReference type="PROSITE" id="PS51352">
    <property type="entry name" value="THIOREDOXIN_2"/>
    <property type="match status" value="1"/>
</dbReference>
<comment type="function">
    <text evidence="1">Thiol-disulfide oxidoreductase which is required in disulfide reduction during c-type cytochrome synthesis. May accept reducing equivalents from CcdA, leading to breakage of disulfide bonds in apocytochrome c; following this reduction heme can be covalently attached.</text>
</comment>
<comment type="pathway">
    <text evidence="1">Protein modification; cytochrome c assembly.</text>
</comment>
<comment type="subcellular location">
    <subcellularLocation>
        <location evidence="1">Cell membrane</location>
        <topology evidence="1">Single-pass type II membrane protein</topology>
    </subcellularLocation>
    <text evidence="1">The thioredoxin-like motif is exposed on the outside of the membrane.</text>
</comment>
<comment type="similarity">
    <text evidence="1">Belongs to the thioredoxin family. ResA subfamily.</text>
</comment>
<keyword id="KW-1003">Cell membrane</keyword>
<keyword id="KW-0201">Cytochrome c-type biogenesis</keyword>
<keyword id="KW-1015">Disulfide bond</keyword>
<keyword id="KW-0472">Membrane</keyword>
<keyword id="KW-0560">Oxidoreductase</keyword>
<keyword id="KW-0676">Redox-active center</keyword>
<keyword id="KW-0735">Signal-anchor</keyword>
<keyword id="KW-0812">Transmembrane</keyword>
<keyword id="KW-1133">Transmembrane helix</keyword>
<proteinExistence type="inferred from homology"/>
<sequence>MKKNRLLFRVIILLILSGAVGFTLYQGFFADKEKMQIGKEAPNFVVTDLEGKKIELKDLKGKGVFLNFWGTWCKPCEKEMPYMNELYPKYKEKGVEIIALDADETDIAVKNFVNQYGLKFPVAIDKGQKIIGTYGVGPLPTSFLIDKDGKVVEQIIGEQTKEQLEGYLKKITP</sequence>
<organism>
    <name type="scientific">Bacillus thuringiensis (strain Al Hakam)</name>
    <dbReference type="NCBI Taxonomy" id="412694"/>
    <lineage>
        <taxon>Bacteria</taxon>
        <taxon>Bacillati</taxon>
        <taxon>Bacillota</taxon>
        <taxon>Bacilli</taxon>
        <taxon>Bacillales</taxon>
        <taxon>Bacillaceae</taxon>
        <taxon>Bacillus</taxon>
        <taxon>Bacillus cereus group</taxon>
    </lineage>
</organism>
<reference key="1">
    <citation type="journal article" date="2007" name="J. Bacteriol.">
        <title>The complete genome sequence of Bacillus thuringiensis Al Hakam.</title>
        <authorList>
            <person name="Challacombe J.F."/>
            <person name="Altherr M.R."/>
            <person name="Xie G."/>
            <person name="Bhotika S.S."/>
            <person name="Brown N."/>
            <person name="Bruce D."/>
            <person name="Campbell C.S."/>
            <person name="Campbell M.L."/>
            <person name="Chen J."/>
            <person name="Chertkov O."/>
            <person name="Cleland C."/>
            <person name="Dimitrijevic M."/>
            <person name="Doggett N.A."/>
            <person name="Fawcett J.J."/>
            <person name="Glavina T."/>
            <person name="Goodwin L.A."/>
            <person name="Green L.D."/>
            <person name="Han C.S."/>
            <person name="Hill K.K."/>
            <person name="Hitchcock P."/>
            <person name="Jackson P.J."/>
            <person name="Keim P."/>
            <person name="Kewalramani A.R."/>
            <person name="Longmire J."/>
            <person name="Lucas S."/>
            <person name="Malfatti S."/>
            <person name="Martinez D."/>
            <person name="McMurry K."/>
            <person name="Meincke L.J."/>
            <person name="Misra M."/>
            <person name="Moseman B.L."/>
            <person name="Mundt M."/>
            <person name="Munk A.C."/>
            <person name="Okinaka R.T."/>
            <person name="Parson-Quintana B."/>
            <person name="Reilly L.P."/>
            <person name="Richardson P."/>
            <person name="Robinson D.L."/>
            <person name="Saunders E."/>
            <person name="Tapia R."/>
            <person name="Tesmer J.G."/>
            <person name="Thayer N."/>
            <person name="Thompson L.S."/>
            <person name="Tice H."/>
            <person name="Ticknor L.O."/>
            <person name="Wills P.L."/>
            <person name="Gilna P."/>
            <person name="Brettin T.S."/>
        </authorList>
    </citation>
    <scope>NUCLEOTIDE SEQUENCE [LARGE SCALE GENOMIC DNA]</scope>
    <source>
        <strain>Al Hakam</strain>
    </source>
</reference>
<name>RESA_BACAH</name>
<protein>
    <recommendedName>
        <fullName evidence="1">Thiol-disulfide oxidoreductase ResA</fullName>
    </recommendedName>
</protein>
<gene>
    <name evidence="1" type="primary">resA</name>
    <name type="ordered locus">BALH_1330</name>
</gene>